<protein>
    <recommendedName>
        <fullName evidence="6">Nickel-binding protein NikA</fullName>
    </recommendedName>
    <alternativeName>
        <fullName evidence="5">SaNikA</fullName>
    </alternativeName>
</protein>
<sequence length="491" mass="55431">MKFKRLATIFSAVLVLSGCGSMHSSGKDLNISLPLKTKSIAPYETDVPVKIGAAESLFKTNDQGKIEKALVKSYHQPNDTTLDIELKDNIKFQNGQKLTAEKVKSSLENSMKKSDLVKYSLPISSITAKGQKLTIKTNSAYPELVSELANPFMAIYDTDAKSDVNQTPVGTGPYQIKDYKQSRKISLSNFKDYWQGKPKLDHITVTYQEDGNNRVRNLESQKDDLITDVPVNKVQDIENNQNLKVSKESGFRTSLLMYNHTNKKMTKSVREALDHIIDRQGIADHIYQGYAKPATSPFNDKIPYIKEPKLTKQNIEQAKMLLAKDGYTKEHPLKIKLITYDGRPELSKIAQVLQSDAKKANIEIDIKSVDDIEGYLKDRSAWDATMYSFGTIPRGDTGYFFNQAYKKDGAINKGDYNNSNVDDLINQLNHTVDVKERHNISNDIIKLSSRDVPNSYIAYNDQIVAANSKVKNYKVTPEGIYLIDYRTTIER</sequence>
<gene>
    <name evidence="4" type="primary">nikA</name>
    <name evidence="4" type="synonym">opp5A</name>
    <name evidence="7" type="ordered locus">SAOUHSC_00201</name>
</gene>
<organism>
    <name type="scientific">Staphylococcus aureus (strain NCTC 8325 / PS 47)</name>
    <dbReference type="NCBI Taxonomy" id="93061"/>
    <lineage>
        <taxon>Bacteria</taxon>
        <taxon>Bacillati</taxon>
        <taxon>Bacillota</taxon>
        <taxon>Bacilli</taxon>
        <taxon>Bacillales</taxon>
        <taxon>Staphylococcaceae</taxon>
        <taxon>Staphylococcus</taxon>
    </lineage>
</organism>
<reference key="1">
    <citation type="book" date="2006" name="Gram positive pathogens, 2nd edition">
        <title>The Staphylococcus aureus NCTC 8325 genome.</title>
        <editorList>
            <person name="Fischetti V."/>
            <person name="Novick R."/>
            <person name="Ferretti J."/>
            <person name="Portnoy D."/>
            <person name="Rood J."/>
        </editorList>
        <authorList>
            <person name="Gillaspy A.F."/>
            <person name="Worrell V."/>
            <person name="Orvis J."/>
            <person name="Roe B.A."/>
            <person name="Dyer D.W."/>
            <person name="Iandolo J.J."/>
        </authorList>
    </citation>
    <scope>NUCLEOTIDE SEQUENCE [LARGE SCALE GENOMIC DNA]</scope>
    <source>
        <strain>NCTC 8325 / PS 47</strain>
    </source>
</reference>
<reference key="2">
    <citation type="journal article" date="2010" name="Mol. Microbiol.">
        <title>A nickel ABC-transporter of Staphylococcus aureus is involved in urinary tract infection.</title>
        <authorList>
            <person name="Hiron A."/>
            <person name="Posteraro B."/>
            <person name="Carriere M."/>
            <person name="Remy L."/>
            <person name="Delporte C."/>
            <person name="La Sorda M."/>
            <person name="Sanguinetti M."/>
            <person name="Juillard V."/>
            <person name="Borezee-Durant E."/>
        </authorList>
    </citation>
    <scope>FUNCTION</scope>
    <scope>SUBUNIT</scope>
    <scope>INDUCTION</scope>
    <scope>DISRUPTION PHENOTYPE</scope>
    <source>
        <strain>RN6390</strain>
    </source>
</reference>
<reference evidence="8" key="3">
    <citation type="submission" date="2011-04" db="PDB data bank">
        <title>1.5 angstrom crystal structure of the complex of ligand binding component of ABC-type import system from Staphylococcus aureus with nickel and two histidines.</title>
        <authorList>
            <person name="Minasov G."/>
            <person name="Halavaty A."/>
            <person name="Shuvalova L."/>
            <person name="Dubrovska I."/>
            <person name="Winsor J."/>
            <person name="Kiryukhina O."/>
            <person name="Falugi F."/>
            <person name="Bottomley M."/>
            <person name="Bagnoli F."/>
            <person name="Grandi G."/>
            <person name="Anderson W.F."/>
        </authorList>
    </citation>
    <scope>X-RAY CRYSTALLOGRAPHY (1.50 ANGSTROMS) OF 23-491</scope>
</reference>
<reference evidence="9 10 11 12 13" key="4">
    <citation type="journal article" date="2015" name="Metallomics">
        <title>Novel insights into nickel import in Staphylococcus aureus: the positive role of free histidine and structural characterization of a new thiazolidine-type nickel chelator.</title>
        <authorList>
            <person name="Lebrette H."/>
            <person name="Borezee-Durant E."/>
            <person name="Martin L."/>
            <person name="Richaud P."/>
            <person name="Boeri Erba E."/>
            <person name="Cavazza C."/>
        </authorList>
    </citation>
    <scope>X-RAY CRYSTALLOGRAPHY (1.70 ANGSTROMS) OF 22-491 IN COMPLEXES WITH NICKEL AND FREE HISTIDINES</scope>
    <scope>FUNCTION</scope>
    <source>
        <strain>RN6390</strain>
    </source>
</reference>
<name>NIKA_STAA8</name>
<keyword id="KW-0002">3D-structure</keyword>
<keyword id="KW-1003">Cell membrane</keyword>
<keyword id="KW-0406">Ion transport</keyword>
<keyword id="KW-0449">Lipoprotein</keyword>
<keyword id="KW-0472">Membrane</keyword>
<keyword id="KW-0533">Nickel</keyword>
<keyword id="KW-0921">Nickel transport</keyword>
<keyword id="KW-0564">Palmitate</keyword>
<keyword id="KW-1185">Reference proteome</keyword>
<keyword id="KW-0732">Signal</keyword>
<keyword id="KW-0813">Transport</keyword>
<dbReference type="EMBL" id="CP000253">
    <property type="protein sequence ID" value="ABD29379.1"/>
    <property type="status" value="ALT_INIT"/>
    <property type="molecule type" value="Genomic_DNA"/>
</dbReference>
<dbReference type="RefSeq" id="WP_000556246.1">
    <property type="nucleotide sequence ID" value="NC_007795.1"/>
</dbReference>
<dbReference type="RefSeq" id="WP_000669653.1">
    <property type="nucleotide sequence ID" value="NZ_LS483365.1"/>
</dbReference>
<dbReference type="RefSeq" id="YP_498798.1">
    <property type="nucleotide sequence ID" value="NC_007795.1"/>
</dbReference>
<dbReference type="PDB" id="3RQT">
    <property type="method" value="X-ray"/>
    <property type="resolution" value="1.50 A"/>
    <property type="chains" value="A=23-491"/>
</dbReference>
<dbReference type="PDB" id="4OFJ">
    <property type="method" value="X-ray"/>
    <property type="resolution" value="1.70 A"/>
    <property type="chains" value="A=22-491"/>
</dbReference>
<dbReference type="PDB" id="4XKN">
    <property type="method" value="X-ray"/>
    <property type="resolution" value="1.85 A"/>
    <property type="chains" value="A=22-491"/>
</dbReference>
<dbReference type="PDB" id="4XKP">
    <property type="method" value="X-ray"/>
    <property type="resolution" value="1.90 A"/>
    <property type="chains" value="A=22-491"/>
</dbReference>
<dbReference type="PDB" id="4XKQ">
    <property type="method" value="X-ray"/>
    <property type="resolution" value="1.90 A"/>
    <property type="chains" value="A=22-491"/>
</dbReference>
<dbReference type="PDB" id="4XKR">
    <property type="method" value="X-ray"/>
    <property type="resolution" value="1.75 A"/>
    <property type="chains" value="A=22-491"/>
</dbReference>
<dbReference type="PDBsum" id="3RQT"/>
<dbReference type="PDBsum" id="4OFJ"/>
<dbReference type="PDBsum" id="4XKN"/>
<dbReference type="PDBsum" id="4XKP"/>
<dbReference type="PDBsum" id="4XKQ"/>
<dbReference type="PDBsum" id="4XKR"/>
<dbReference type="SMR" id="Q2G2P5"/>
<dbReference type="STRING" id="93061.SAOUHSC_00201"/>
<dbReference type="PaxDb" id="1280-SAXN108_0215"/>
<dbReference type="GeneID" id="3920357"/>
<dbReference type="KEGG" id="sao:SAOUHSC_00201"/>
<dbReference type="PATRIC" id="fig|93061.5.peg.186"/>
<dbReference type="eggNOG" id="COG0747">
    <property type="taxonomic scope" value="Bacteria"/>
</dbReference>
<dbReference type="HOGENOM" id="CLU_017028_7_5_9"/>
<dbReference type="OrthoDB" id="9796817at2"/>
<dbReference type="EvolutionaryTrace" id="Q2G2P5"/>
<dbReference type="Proteomes" id="UP000008816">
    <property type="component" value="Chromosome"/>
</dbReference>
<dbReference type="GO" id="GO:0043190">
    <property type="term" value="C:ATP-binding cassette (ABC) transporter complex"/>
    <property type="evidence" value="ECO:0007669"/>
    <property type="project" value="InterPro"/>
</dbReference>
<dbReference type="GO" id="GO:0042597">
    <property type="term" value="C:periplasmic space"/>
    <property type="evidence" value="ECO:0007669"/>
    <property type="project" value="UniProtKB-ARBA"/>
</dbReference>
<dbReference type="GO" id="GO:1904680">
    <property type="term" value="F:peptide transmembrane transporter activity"/>
    <property type="evidence" value="ECO:0000318"/>
    <property type="project" value="GO_Central"/>
</dbReference>
<dbReference type="GO" id="GO:0015675">
    <property type="term" value="P:nickel cation transport"/>
    <property type="evidence" value="ECO:0007669"/>
    <property type="project" value="UniProtKB-KW"/>
</dbReference>
<dbReference type="GO" id="GO:0015833">
    <property type="term" value="P:peptide transport"/>
    <property type="evidence" value="ECO:0000318"/>
    <property type="project" value="GO_Central"/>
</dbReference>
<dbReference type="CDD" id="cd08490">
    <property type="entry name" value="PBP2_NikA_DppA_OppA_like_3"/>
    <property type="match status" value="1"/>
</dbReference>
<dbReference type="Gene3D" id="3.10.105.10">
    <property type="entry name" value="Dipeptide-binding Protein, Domain 3"/>
    <property type="match status" value="1"/>
</dbReference>
<dbReference type="Gene3D" id="3.40.190.10">
    <property type="entry name" value="Periplasmic binding protein-like II"/>
    <property type="match status" value="1"/>
</dbReference>
<dbReference type="InterPro" id="IPR050035">
    <property type="entry name" value="NikA"/>
</dbReference>
<dbReference type="InterPro" id="IPR030678">
    <property type="entry name" value="Peptide/Ni-bd"/>
</dbReference>
<dbReference type="InterPro" id="IPR039424">
    <property type="entry name" value="SBP_5"/>
</dbReference>
<dbReference type="InterPro" id="IPR000914">
    <property type="entry name" value="SBP_5_dom"/>
</dbReference>
<dbReference type="NCBIfam" id="NF045468">
    <property type="entry name" value="Opp5A_nikA"/>
    <property type="match status" value="1"/>
</dbReference>
<dbReference type="PANTHER" id="PTHR30290:SF9">
    <property type="entry name" value="OLIGOPEPTIDE-BINDING PROTEIN APPA"/>
    <property type="match status" value="1"/>
</dbReference>
<dbReference type="PANTHER" id="PTHR30290">
    <property type="entry name" value="PERIPLASMIC BINDING COMPONENT OF ABC TRANSPORTER"/>
    <property type="match status" value="1"/>
</dbReference>
<dbReference type="Pfam" id="PF00496">
    <property type="entry name" value="SBP_bac_5"/>
    <property type="match status" value="1"/>
</dbReference>
<dbReference type="PIRSF" id="PIRSF002741">
    <property type="entry name" value="MppA"/>
    <property type="match status" value="1"/>
</dbReference>
<dbReference type="SUPFAM" id="SSF53850">
    <property type="entry name" value="Periplasmic binding protein-like II"/>
    <property type="match status" value="1"/>
</dbReference>
<dbReference type="PROSITE" id="PS51257">
    <property type="entry name" value="PROKAR_LIPOPROTEIN"/>
    <property type="match status" value="1"/>
</dbReference>
<evidence type="ECO:0000255" key="1">
    <source>
        <dbReference type="PROSITE-ProRule" id="PRU00303"/>
    </source>
</evidence>
<evidence type="ECO:0000269" key="2">
    <source>
    </source>
</evidence>
<evidence type="ECO:0000269" key="3">
    <source>
    </source>
</evidence>
<evidence type="ECO:0000303" key="4">
    <source>
    </source>
</evidence>
<evidence type="ECO:0000303" key="5">
    <source>
    </source>
</evidence>
<evidence type="ECO:0000305" key="6"/>
<evidence type="ECO:0000312" key="7">
    <source>
        <dbReference type="EMBL" id="ABD29379.1"/>
    </source>
</evidence>
<evidence type="ECO:0007744" key="8">
    <source>
        <dbReference type="PDB" id="3RQT"/>
    </source>
</evidence>
<evidence type="ECO:0007744" key="9">
    <source>
        <dbReference type="PDB" id="4OFJ"/>
    </source>
</evidence>
<evidence type="ECO:0007744" key="10">
    <source>
        <dbReference type="PDB" id="4XKN"/>
    </source>
</evidence>
<evidence type="ECO:0007744" key="11">
    <source>
        <dbReference type="PDB" id="4XKP"/>
    </source>
</evidence>
<evidence type="ECO:0007744" key="12">
    <source>
        <dbReference type="PDB" id="4XKQ"/>
    </source>
</evidence>
<evidence type="ECO:0007744" key="13">
    <source>
        <dbReference type="PDB" id="4XKR"/>
    </source>
</evidence>
<evidence type="ECO:0007829" key="14">
    <source>
        <dbReference type="PDB" id="3RQT"/>
    </source>
</evidence>
<comment type="function">
    <text evidence="2 3">Part of the ABC transporter complex NikABCDE (Opp2) involved in nickel import. Binds nickel and transfers it to the membrane-bound permease. Required for full urease activity and plays a significant role in the virulence of S.aureus during urinary tract infection (UTI) (PubMed:20662775). May bind nickel via a nickel-chelator (PubMed:25611161).</text>
</comment>
<comment type="subunit">
    <text evidence="2">The complex is composed of two ATP-binding proteins (NikD and NikE), two transmembrane proteins (NikB and NikC) and a solute-binding protein (NikA).</text>
</comment>
<comment type="subcellular location">
    <subcellularLocation>
        <location evidence="1">Cell membrane</location>
        <topology evidence="1">Lipid-anchor</topology>
    </subcellularLocation>
</comment>
<comment type="induction">
    <text evidence="2">Induced in response to decrease in pH and as a function of growth phase.</text>
</comment>
<comment type="disruption phenotype">
    <text evidence="2">Deletion of the gene strongly reduces nickel transport and urease activity. Mutant shows decreased virulence in a mouse model of ascending UTI. Nickel accumulation and urease activity are almost completely abolished in a nixA-nikA double mutant.</text>
</comment>
<comment type="similarity">
    <text evidence="6">Belongs to the bacterial solute-binding protein 5 family.</text>
</comment>
<comment type="sequence caution" evidence="6">
    <conflict type="erroneous initiation">
        <sequence resource="EMBL-CDS" id="ABD29379"/>
    </conflict>
    <text>Truncated N-terminus.</text>
</comment>
<accession>Q2G2P5</accession>
<accession>A0A0H2UKY7</accession>
<accession>A0A0J9X272</accession>
<feature type="signal peptide" evidence="1">
    <location>
        <begin position="1"/>
        <end position="18"/>
    </location>
</feature>
<feature type="chain" id="PRO_0000447263" description="Nickel-binding protein NikA" evidence="1">
    <location>
        <begin position="19"/>
        <end position="491"/>
    </location>
</feature>
<feature type="lipid moiety-binding region" description="N-palmitoyl cysteine" evidence="1">
    <location>
        <position position="19"/>
    </location>
</feature>
<feature type="lipid moiety-binding region" description="S-diacylglycerol cysteine" evidence="1">
    <location>
        <position position="19"/>
    </location>
</feature>
<feature type="strand" evidence="14">
    <location>
        <begin position="28"/>
        <end position="35"/>
    </location>
</feature>
<feature type="turn" evidence="14">
    <location>
        <begin position="42"/>
        <end position="44"/>
    </location>
</feature>
<feature type="helix" evidence="14">
    <location>
        <begin position="47"/>
        <end position="50"/>
    </location>
</feature>
<feature type="strand" evidence="14">
    <location>
        <begin position="57"/>
        <end position="60"/>
    </location>
</feature>
<feature type="strand" evidence="14">
    <location>
        <begin position="66"/>
        <end position="78"/>
    </location>
</feature>
<feature type="strand" evidence="14">
    <location>
        <begin position="81"/>
        <end position="86"/>
    </location>
</feature>
<feature type="helix" evidence="14">
    <location>
        <begin position="100"/>
        <end position="113"/>
    </location>
</feature>
<feature type="helix" evidence="14">
    <location>
        <begin position="115"/>
        <end position="120"/>
    </location>
</feature>
<feature type="strand" evidence="14">
    <location>
        <begin position="123"/>
        <end position="129"/>
    </location>
</feature>
<feature type="strand" evidence="14">
    <location>
        <begin position="132"/>
        <end position="139"/>
    </location>
</feature>
<feature type="helix" evidence="14">
    <location>
        <begin position="144"/>
        <end position="147"/>
    </location>
</feature>
<feature type="helix" evidence="14">
    <location>
        <begin position="151"/>
        <end position="153"/>
    </location>
</feature>
<feature type="turn" evidence="14">
    <location>
        <begin position="164"/>
        <end position="166"/>
    </location>
</feature>
<feature type="strand" evidence="14">
    <location>
        <begin position="171"/>
        <end position="180"/>
    </location>
</feature>
<feature type="turn" evidence="14">
    <location>
        <begin position="181"/>
        <end position="183"/>
    </location>
</feature>
<feature type="strand" evidence="14">
    <location>
        <begin position="184"/>
        <end position="189"/>
    </location>
</feature>
<feature type="strand" evidence="14">
    <location>
        <begin position="201"/>
        <end position="207"/>
    </location>
</feature>
<feature type="helix" evidence="14">
    <location>
        <begin position="211"/>
        <end position="219"/>
    </location>
</feature>
<feature type="strand" evidence="14">
    <location>
        <begin position="224"/>
        <end position="228"/>
    </location>
</feature>
<feature type="helix" evidence="14">
    <location>
        <begin position="231"/>
        <end position="233"/>
    </location>
</feature>
<feature type="helix" evidence="14">
    <location>
        <begin position="234"/>
        <end position="239"/>
    </location>
</feature>
<feature type="strand" evidence="14">
    <location>
        <begin position="243"/>
        <end position="258"/>
    </location>
</feature>
<feature type="helix" evidence="14">
    <location>
        <begin position="267"/>
        <end position="276"/>
    </location>
</feature>
<feature type="helix" evidence="14">
    <location>
        <begin position="279"/>
        <end position="285"/>
    </location>
</feature>
<feature type="strand" evidence="14">
    <location>
        <begin position="290"/>
        <end position="293"/>
    </location>
</feature>
<feature type="strand" evidence="14">
    <location>
        <begin position="295"/>
        <end position="298"/>
    </location>
</feature>
<feature type="helix" evidence="14">
    <location>
        <begin position="315"/>
        <end position="323"/>
    </location>
</feature>
<feature type="turn" evidence="14">
    <location>
        <begin position="324"/>
        <end position="326"/>
    </location>
</feature>
<feature type="strand" evidence="14">
    <location>
        <begin position="329"/>
        <end position="331"/>
    </location>
</feature>
<feature type="strand" evidence="14">
    <location>
        <begin position="333"/>
        <end position="339"/>
    </location>
</feature>
<feature type="strand" evidence="14">
    <location>
        <begin position="341"/>
        <end position="343"/>
    </location>
</feature>
<feature type="helix" evidence="14">
    <location>
        <begin position="345"/>
        <end position="358"/>
    </location>
</feature>
<feature type="turn" evidence="14">
    <location>
        <begin position="359"/>
        <end position="361"/>
    </location>
</feature>
<feature type="strand" evidence="14">
    <location>
        <begin position="362"/>
        <end position="368"/>
    </location>
</feature>
<feature type="helix" evidence="14">
    <location>
        <begin position="372"/>
        <end position="375"/>
    </location>
</feature>
<feature type="strand" evidence="14">
    <location>
        <begin position="383"/>
        <end position="391"/>
    </location>
</feature>
<feature type="helix" evidence="14">
    <location>
        <begin position="398"/>
        <end position="404"/>
    </location>
</feature>
<feature type="helix" evidence="14">
    <location>
        <begin position="419"/>
        <end position="429"/>
    </location>
</feature>
<feature type="helix" evidence="14">
    <location>
        <begin position="434"/>
        <end position="451"/>
    </location>
</feature>
<feature type="strand" evidence="14">
    <location>
        <begin position="453"/>
        <end position="467"/>
    </location>
</feature>
<proteinExistence type="evidence at protein level"/>